<keyword id="KW-0963">Cytoplasm</keyword>
<keyword id="KW-0931">ER-Golgi transport</keyword>
<keyword id="KW-0539">Nucleus</keyword>
<keyword id="KW-1185">Reference proteome</keyword>
<keyword id="KW-0804">Transcription</keyword>
<keyword id="KW-0813">Transport</keyword>
<organism>
    <name type="scientific">Bos taurus</name>
    <name type="common">Bovine</name>
    <dbReference type="NCBI Taxonomy" id="9913"/>
    <lineage>
        <taxon>Eukaryota</taxon>
        <taxon>Metazoa</taxon>
        <taxon>Chordata</taxon>
        <taxon>Craniata</taxon>
        <taxon>Vertebrata</taxon>
        <taxon>Euteleostomi</taxon>
        <taxon>Mammalia</taxon>
        <taxon>Eutheria</taxon>
        <taxon>Laurasiatheria</taxon>
        <taxon>Artiodactyla</taxon>
        <taxon>Ruminantia</taxon>
        <taxon>Pecora</taxon>
        <taxon>Bovidae</taxon>
        <taxon>Bovinae</taxon>
        <taxon>Bos</taxon>
    </lineage>
</organism>
<feature type="chain" id="PRO_0000260208" description="Trafficking protein particle complex subunit 2">
    <location>
        <begin position="1"/>
        <end position="140"/>
    </location>
</feature>
<comment type="function">
    <text evidence="1">Prevents ENO1-mediated transcriptional repression and antagonizes ENO1-mediated cell death. May play a role in vesicular transport from endoplasmic reticulum to Golgi (By similarity).</text>
</comment>
<comment type="subunit">
    <text evidence="1">Part of the multisubunit TRAPP (transport protein particle) complex. Interacts with ENO1, PITX1, SF1, TRAPPC2L and TRAPPC3.</text>
</comment>
<comment type="subcellular location">
    <subcellularLocation>
        <location evidence="2">Cytoplasm</location>
        <location evidence="2">Perinuclear region</location>
    </subcellularLocation>
    <subcellularLocation>
        <location evidence="2">Nucleus</location>
    </subcellularLocation>
    <subcellularLocation>
        <location evidence="2">Endoplasmic reticulum-Golgi intermediate compartment</location>
    </subcellularLocation>
    <subcellularLocation>
        <location evidence="2">Cytoplasm</location>
    </subcellularLocation>
    <text evidence="2">Localized in perinuclear granular structures.</text>
</comment>
<comment type="similarity">
    <text evidence="3">Belongs to the TRAPP small subunits family. Sedlin subfamily.</text>
</comment>
<evidence type="ECO:0000250" key="1"/>
<evidence type="ECO:0000250" key="2">
    <source>
        <dbReference type="UniProtKB" id="P0DI81"/>
    </source>
</evidence>
<evidence type="ECO:0000305" key="3"/>
<dbReference type="EMBL" id="BC102418">
    <property type="protein sequence ID" value="AAI02419.1"/>
    <property type="molecule type" value="mRNA"/>
</dbReference>
<dbReference type="RefSeq" id="NP_001029968.1">
    <property type="nucleotide sequence ID" value="NM_001034796.1"/>
</dbReference>
<dbReference type="RefSeq" id="XP_059739535.1">
    <property type="nucleotide sequence ID" value="XM_059883552.1"/>
</dbReference>
<dbReference type="SMR" id="Q3T0F2"/>
<dbReference type="FunCoup" id="Q3T0F2">
    <property type="interactions" value="2068"/>
</dbReference>
<dbReference type="IntAct" id="Q3T0F2">
    <property type="interactions" value="2"/>
</dbReference>
<dbReference type="STRING" id="9913.ENSBTAP00000014509"/>
<dbReference type="PaxDb" id="9913-ENSBTAP00000014509"/>
<dbReference type="GeneID" id="616748"/>
<dbReference type="KEGG" id="bta:616748"/>
<dbReference type="CTD" id="6399"/>
<dbReference type="VEuPathDB" id="HostDB:ENSBTAG00000010922"/>
<dbReference type="eggNOG" id="KOG3487">
    <property type="taxonomic scope" value="Eukaryota"/>
</dbReference>
<dbReference type="HOGENOM" id="CLU_085828_0_2_1"/>
<dbReference type="InParanoid" id="Q3T0F2"/>
<dbReference type="OMA" id="RYMNQFI"/>
<dbReference type="OrthoDB" id="10252102at2759"/>
<dbReference type="TreeFam" id="TF314814"/>
<dbReference type="Reactome" id="R-BTA-204005">
    <property type="pathway name" value="COPII-mediated vesicle transport"/>
</dbReference>
<dbReference type="Reactome" id="R-BTA-8876198">
    <property type="pathway name" value="RAB GEFs exchange GTP for GDP on RABs"/>
</dbReference>
<dbReference type="Proteomes" id="UP000009136">
    <property type="component" value="Chromosome X"/>
</dbReference>
<dbReference type="Bgee" id="ENSBTAG00000010922">
    <property type="expression patterns" value="Expressed in oocyte and 105 other cell types or tissues"/>
</dbReference>
<dbReference type="GO" id="GO:0005737">
    <property type="term" value="C:cytoplasm"/>
    <property type="evidence" value="ECO:0000318"/>
    <property type="project" value="GO_Central"/>
</dbReference>
<dbReference type="GO" id="GO:0005793">
    <property type="term" value="C:endoplasmic reticulum-Golgi intermediate compartment"/>
    <property type="evidence" value="ECO:0007669"/>
    <property type="project" value="UniProtKB-SubCell"/>
</dbReference>
<dbReference type="GO" id="GO:0005634">
    <property type="term" value="C:nucleus"/>
    <property type="evidence" value="ECO:0000250"/>
    <property type="project" value="UniProtKB"/>
</dbReference>
<dbReference type="GO" id="GO:0048471">
    <property type="term" value="C:perinuclear region of cytoplasm"/>
    <property type="evidence" value="ECO:0007669"/>
    <property type="project" value="UniProtKB-SubCell"/>
</dbReference>
<dbReference type="GO" id="GO:0030008">
    <property type="term" value="C:TRAPP complex"/>
    <property type="evidence" value="ECO:0000318"/>
    <property type="project" value="GO_Central"/>
</dbReference>
<dbReference type="GO" id="GO:0006888">
    <property type="term" value="P:endoplasmic reticulum to Golgi vesicle-mediated transport"/>
    <property type="evidence" value="ECO:0000318"/>
    <property type="project" value="GO_Central"/>
</dbReference>
<dbReference type="CDD" id="cd14825">
    <property type="entry name" value="TRAPPC2_sedlin"/>
    <property type="match status" value="1"/>
</dbReference>
<dbReference type="FunFam" id="3.30.450.70:FF:000001">
    <property type="entry name" value="Trafficking protein particle complex subunit 2"/>
    <property type="match status" value="1"/>
</dbReference>
<dbReference type="Gene3D" id="3.30.450.70">
    <property type="match status" value="1"/>
</dbReference>
<dbReference type="InterPro" id="IPR011012">
    <property type="entry name" value="Longin-like_dom_sf"/>
</dbReference>
<dbReference type="InterPro" id="IPR006722">
    <property type="entry name" value="Sedlin"/>
</dbReference>
<dbReference type="PANTHER" id="PTHR12403">
    <property type="entry name" value="TRAFFICKING PROTEIN PARTICLE COMPLEX SUBUNIT 2"/>
    <property type="match status" value="1"/>
</dbReference>
<dbReference type="Pfam" id="PF04628">
    <property type="entry name" value="Sedlin_N"/>
    <property type="match status" value="1"/>
</dbReference>
<dbReference type="SUPFAM" id="SSF64356">
    <property type="entry name" value="SNARE-like"/>
    <property type="match status" value="1"/>
</dbReference>
<accession>Q3T0F2</accession>
<proteinExistence type="evidence at transcript level"/>
<protein>
    <recommendedName>
        <fullName>Trafficking protein particle complex subunit 2</fullName>
    </recommendedName>
</protein>
<gene>
    <name type="primary">TRAPPC2</name>
</gene>
<reference key="1">
    <citation type="submission" date="2005-08" db="EMBL/GenBank/DDBJ databases">
        <authorList>
            <consortium name="NIH - Mammalian Gene Collection (MGC) project"/>
        </authorList>
    </citation>
    <scope>NUCLEOTIDE SEQUENCE [LARGE SCALE MRNA]</scope>
    <source>
        <strain>Crossbred X Angus</strain>
        <tissue>Ileum</tissue>
    </source>
</reference>
<sequence length="140" mass="16415">MSGSFYFVIVGHHDNPVFEMEFLPAGKAESKDDHRHLNQFIAHAALDLVDENMWLSNNMYLKTVDKFNEWFVSAFVTAGHMRFIMLHDVRQEDGIKNFFTDVYDLYIKFAMNPFYEPNSPIRSSAFDRKVQFLGKKHLLS</sequence>
<name>TPPC2_BOVIN</name>